<name>RBPL_ORYSJ</name>
<organism>
    <name type="scientific">Oryza sativa subsp. japonica</name>
    <name type="common">Rice</name>
    <dbReference type="NCBI Taxonomy" id="39947"/>
    <lineage>
        <taxon>Eukaryota</taxon>
        <taxon>Viridiplantae</taxon>
        <taxon>Streptophyta</taxon>
        <taxon>Embryophyta</taxon>
        <taxon>Tracheophyta</taxon>
        <taxon>Spermatophyta</taxon>
        <taxon>Magnoliopsida</taxon>
        <taxon>Liliopsida</taxon>
        <taxon>Poales</taxon>
        <taxon>Poaceae</taxon>
        <taxon>BOP clade</taxon>
        <taxon>Oryzoideae</taxon>
        <taxon>Oryzeae</taxon>
        <taxon>Oryzinae</taxon>
        <taxon>Oryza</taxon>
        <taxon>Oryza sativa</taxon>
    </lineage>
</organism>
<proteinExistence type="evidence at protein level"/>
<keyword id="KW-0963">Cytoplasm</keyword>
<keyword id="KW-0539">Nucleus</keyword>
<keyword id="KW-1185">Reference proteome</keyword>
<keyword id="KW-0677">Repeat</keyword>
<keyword id="KW-0694">RNA-binding</keyword>
<dbReference type="EMBL" id="AL606669">
    <property type="protein sequence ID" value="CAE04743.3"/>
    <property type="status" value="ALT_INIT"/>
    <property type="molecule type" value="Genomic_DNA"/>
</dbReference>
<dbReference type="EMBL" id="AP008210">
    <property type="protein sequence ID" value="BAF15855.1"/>
    <property type="molecule type" value="Genomic_DNA"/>
</dbReference>
<dbReference type="EMBL" id="AP014960">
    <property type="protein sequence ID" value="BAS91113.1"/>
    <property type="molecule type" value="Genomic_DNA"/>
</dbReference>
<dbReference type="EMBL" id="AK120834">
    <property type="protein sequence ID" value="BAH00195.1"/>
    <property type="molecule type" value="mRNA"/>
</dbReference>
<dbReference type="SMR" id="Q0J9Y2"/>
<dbReference type="FunCoup" id="Q0J9Y2">
    <property type="interactions" value="995"/>
</dbReference>
<dbReference type="STRING" id="39947.Q0J9Y2"/>
<dbReference type="PaxDb" id="39947-Q0J9Y2"/>
<dbReference type="EnsemblPlants" id="Os04t0625800-01">
    <property type="protein sequence ID" value="Os04t0625800-01"/>
    <property type="gene ID" value="Os04g0625800"/>
</dbReference>
<dbReference type="Gramene" id="Os04t0625800-01">
    <property type="protein sequence ID" value="Os04t0625800-01"/>
    <property type="gene ID" value="Os04g0625800"/>
</dbReference>
<dbReference type="KEGG" id="dosa:Os04g0625800"/>
<dbReference type="KEGG" id="osa:4337064"/>
<dbReference type="eggNOG" id="KOG0118">
    <property type="taxonomic scope" value="Eukaryota"/>
</dbReference>
<dbReference type="HOGENOM" id="CLU_016304_2_1_1"/>
<dbReference type="InParanoid" id="Q0J9Y2"/>
<dbReference type="OMA" id="RNLNGMQ"/>
<dbReference type="OrthoDB" id="446113at2759"/>
<dbReference type="Proteomes" id="UP000000763">
    <property type="component" value="Chromosome 4"/>
</dbReference>
<dbReference type="Proteomes" id="UP000059680">
    <property type="component" value="Chromosome 4"/>
</dbReference>
<dbReference type="GO" id="GO:0005737">
    <property type="term" value="C:cytoplasm"/>
    <property type="evidence" value="ECO:0000314"/>
    <property type="project" value="UniProtKB"/>
</dbReference>
<dbReference type="GO" id="GO:0005829">
    <property type="term" value="C:cytosol"/>
    <property type="evidence" value="ECO:0000318"/>
    <property type="project" value="GO_Central"/>
</dbReference>
<dbReference type="GO" id="GO:0005634">
    <property type="term" value="C:nucleus"/>
    <property type="evidence" value="ECO:0000314"/>
    <property type="project" value="UniProtKB"/>
</dbReference>
<dbReference type="GO" id="GO:0003729">
    <property type="term" value="F:mRNA binding"/>
    <property type="evidence" value="ECO:0000314"/>
    <property type="project" value="UniProtKB"/>
</dbReference>
<dbReference type="GO" id="GO:0051028">
    <property type="term" value="P:mRNA transport"/>
    <property type="evidence" value="ECO:0000314"/>
    <property type="project" value="UniProtKB"/>
</dbReference>
<dbReference type="CDD" id="cd12344">
    <property type="entry name" value="RRM1_SECp43_like"/>
    <property type="match status" value="1"/>
</dbReference>
<dbReference type="CDD" id="cd12345">
    <property type="entry name" value="RRM2_SECp43_like"/>
    <property type="match status" value="1"/>
</dbReference>
<dbReference type="CDD" id="cd12346">
    <property type="entry name" value="RRM3_NGR1_NAM8_like"/>
    <property type="match status" value="1"/>
</dbReference>
<dbReference type="FunFam" id="3.30.70.330:FF:000236">
    <property type="entry name" value="Polyadenylate-binding protein RBP45C"/>
    <property type="match status" value="1"/>
</dbReference>
<dbReference type="FunFam" id="3.30.70.330:FF:000437">
    <property type="entry name" value="Polyadenylate-binding protein RBP45C"/>
    <property type="match status" value="1"/>
</dbReference>
<dbReference type="FunFam" id="3.30.70.330:FF:000103">
    <property type="entry name" value="Polyadenylate-binding protein RBP47B"/>
    <property type="match status" value="1"/>
</dbReference>
<dbReference type="Gene3D" id="3.30.70.330">
    <property type="match status" value="3"/>
</dbReference>
<dbReference type="InterPro" id="IPR012677">
    <property type="entry name" value="Nucleotide-bd_a/b_plait_sf"/>
</dbReference>
<dbReference type="InterPro" id="IPR035979">
    <property type="entry name" value="RBD_domain_sf"/>
</dbReference>
<dbReference type="InterPro" id="IPR050825">
    <property type="entry name" value="RBM42_RBP45_47-like"/>
</dbReference>
<dbReference type="InterPro" id="IPR000504">
    <property type="entry name" value="RRM_dom"/>
</dbReference>
<dbReference type="PANTHER" id="PTHR47640:SF23">
    <property type="entry name" value="RNA-BINDING PROTEIN L"/>
    <property type="match status" value="1"/>
</dbReference>
<dbReference type="PANTHER" id="PTHR47640">
    <property type="entry name" value="TRNA SELENOCYSTEINE 1-ASSOCIATED PROTEIN 1-RELATED-RELATED"/>
    <property type="match status" value="1"/>
</dbReference>
<dbReference type="Pfam" id="PF00076">
    <property type="entry name" value="RRM_1"/>
    <property type="match status" value="3"/>
</dbReference>
<dbReference type="SMART" id="SM00360">
    <property type="entry name" value="RRM"/>
    <property type="match status" value="3"/>
</dbReference>
<dbReference type="SUPFAM" id="SSF54928">
    <property type="entry name" value="RNA-binding domain, RBD"/>
    <property type="match status" value="3"/>
</dbReference>
<dbReference type="PROSITE" id="PS50102">
    <property type="entry name" value="RRM"/>
    <property type="match status" value="3"/>
</dbReference>
<sequence>MQQPPSQPQPGMGGPPPPPQGAAGQPPQWGAIPPPMPPHQYGAPPPQQPPAMWGQPPPQAHYGQVPPPQPYYAAPPPQAMPAPAAADEVKTLWIGDLQPWMDESYIYNCFAATGEVQSVKLIRDKQSGQLQGYGFVEFTSRAAADRILQTYNGQMMPNVEMVFRLNWASAGEKRDDTPDYTIFVGDLAADVTDYLLQETFRVHYPSVKGAKVVTDKMTMRSKGYGFVKFGDPTEQARAMTEMNGMLCSSRPMRIGPAANKKTTGVQERVPNAQGAQSENDPNNTTIFVGGLDPNVTEDVLKQVFAPYGEVVHVKIPVGKRCGFVQYVNRPSAEQALAVLQGTLIGGQNVRLSWGRSLSNKQPQHDSNQWGAGAGAGGYYGGYGQGYEAYGGYAQPQDPNMYGYGAYAGYPNYQQQQVAQQQPPQQ</sequence>
<protein>
    <recommendedName>
        <fullName evidence="7">RNA-binding protein L</fullName>
    </recommendedName>
</protein>
<accession>Q0J9Y2</accession>
<accession>A0A0N7KJR0</accession>
<accession>Q7XM93</accession>
<reference key="1">
    <citation type="journal article" date="2002" name="Nature">
        <title>Sequence and analysis of rice chromosome 4.</title>
        <authorList>
            <person name="Feng Q."/>
            <person name="Zhang Y."/>
            <person name="Hao P."/>
            <person name="Wang S."/>
            <person name="Fu G."/>
            <person name="Huang Y."/>
            <person name="Li Y."/>
            <person name="Zhu J."/>
            <person name="Liu Y."/>
            <person name="Hu X."/>
            <person name="Jia P."/>
            <person name="Zhang Y."/>
            <person name="Zhao Q."/>
            <person name="Ying K."/>
            <person name="Yu S."/>
            <person name="Tang Y."/>
            <person name="Weng Q."/>
            <person name="Zhang L."/>
            <person name="Lu Y."/>
            <person name="Mu J."/>
            <person name="Lu Y."/>
            <person name="Zhang L.S."/>
            <person name="Yu Z."/>
            <person name="Fan D."/>
            <person name="Liu X."/>
            <person name="Lu T."/>
            <person name="Li C."/>
            <person name="Wu Y."/>
            <person name="Sun T."/>
            <person name="Lei H."/>
            <person name="Li T."/>
            <person name="Hu H."/>
            <person name="Guan J."/>
            <person name="Wu M."/>
            <person name="Zhang R."/>
            <person name="Zhou B."/>
            <person name="Chen Z."/>
            <person name="Chen L."/>
            <person name="Jin Z."/>
            <person name="Wang R."/>
            <person name="Yin H."/>
            <person name="Cai Z."/>
            <person name="Ren S."/>
            <person name="Lv G."/>
            <person name="Gu W."/>
            <person name="Zhu G."/>
            <person name="Tu Y."/>
            <person name="Jia J."/>
            <person name="Zhang Y."/>
            <person name="Chen J."/>
            <person name="Kang H."/>
            <person name="Chen X."/>
            <person name="Shao C."/>
            <person name="Sun Y."/>
            <person name="Hu Q."/>
            <person name="Zhang X."/>
            <person name="Zhang W."/>
            <person name="Wang L."/>
            <person name="Ding C."/>
            <person name="Sheng H."/>
            <person name="Gu J."/>
            <person name="Chen S."/>
            <person name="Ni L."/>
            <person name="Zhu F."/>
            <person name="Chen W."/>
            <person name="Lan L."/>
            <person name="Lai Y."/>
            <person name="Cheng Z."/>
            <person name="Gu M."/>
            <person name="Jiang J."/>
            <person name="Li J."/>
            <person name="Hong G."/>
            <person name="Xue Y."/>
            <person name="Han B."/>
        </authorList>
    </citation>
    <scope>NUCLEOTIDE SEQUENCE [LARGE SCALE GENOMIC DNA]</scope>
    <source>
        <strain>cv. Nipponbare</strain>
    </source>
</reference>
<reference key="2">
    <citation type="journal article" date="2005" name="Nature">
        <title>The map-based sequence of the rice genome.</title>
        <authorList>
            <consortium name="International rice genome sequencing project (IRGSP)"/>
        </authorList>
    </citation>
    <scope>NUCLEOTIDE SEQUENCE [LARGE SCALE GENOMIC DNA]</scope>
    <source>
        <strain>cv. Nipponbare</strain>
    </source>
</reference>
<reference key="3">
    <citation type="journal article" date="2008" name="Nucleic Acids Res.">
        <title>The rice annotation project database (RAP-DB): 2008 update.</title>
        <authorList>
            <consortium name="The rice annotation project (RAP)"/>
        </authorList>
    </citation>
    <scope>GENOME REANNOTATION</scope>
    <source>
        <strain>cv. Nipponbare</strain>
    </source>
</reference>
<reference key="4">
    <citation type="journal article" date="2013" name="Rice">
        <title>Improvement of the Oryza sativa Nipponbare reference genome using next generation sequence and optical map data.</title>
        <authorList>
            <person name="Kawahara Y."/>
            <person name="de la Bastide M."/>
            <person name="Hamilton J.P."/>
            <person name="Kanamori H."/>
            <person name="McCombie W.R."/>
            <person name="Ouyang S."/>
            <person name="Schwartz D.C."/>
            <person name="Tanaka T."/>
            <person name="Wu J."/>
            <person name="Zhou S."/>
            <person name="Childs K.L."/>
            <person name="Davidson R.M."/>
            <person name="Lin H."/>
            <person name="Quesada-Ocampo L."/>
            <person name="Vaillancourt B."/>
            <person name="Sakai H."/>
            <person name="Lee S.S."/>
            <person name="Kim J."/>
            <person name="Numa H."/>
            <person name="Itoh T."/>
            <person name="Buell C.R."/>
            <person name="Matsumoto T."/>
        </authorList>
    </citation>
    <scope>GENOME REANNOTATION</scope>
    <source>
        <strain>cv. Nipponbare</strain>
    </source>
</reference>
<reference key="5">
    <citation type="journal article" date="2003" name="Science">
        <title>Collection, mapping, and annotation of over 28,000 cDNA clones from japonica rice.</title>
        <authorList>
            <consortium name="The rice full-length cDNA consortium"/>
        </authorList>
    </citation>
    <scope>NUCLEOTIDE SEQUENCE [LARGE SCALE MRNA]</scope>
    <source>
        <strain>cv. Nipponbare</strain>
    </source>
</reference>
<reference key="6">
    <citation type="journal article" date="2010" name="Planta">
        <title>Isolation and identification of cytoskeleton-associated prolamine mRNA binding proteins from developing rice seeds.</title>
        <authorList>
            <person name="Crofts A.J."/>
            <person name="Crofts N."/>
            <person name="Whitelegge J.P."/>
            <person name="Okita T.W."/>
        </authorList>
    </citation>
    <scope>IDENTIFICATION BY MASS SPECTROMETRY</scope>
    <scope>FUNCTION</scope>
</reference>
<reference key="7">
    <citation type="journal article" date="2018" name="Plant Cell">
        <title>RNA-binding protein RBP-P is required for glutelin and prolamine mRNA localization in rice endosperm cells.</title>
        <authorList>
            <person name="Tian L."/>
            <person name="Chou H.L."/>
            <person name="Zhang L."/>
            <person name="Hwang S.K."/>
            <person name="Starkenburg S.R."/>
            <person name="Doroshenk K.A."/>
            <person name="Kumamaru T."/>
            <person name="Okita T.W."/>
        </authorList>
    </citation>
    <scope>INTERACTION WITH RBP-P</scope>
</reference>
<reference key="8">
    <citation type="journal article" date="2019" name="Plant Physiol.">
        <title>Targeted endoplasmic reticulum localization of storage protein mRNAs requires the RNA-binding protein RBP-L.</title>
        <authorList>
            <person name="Tian L."/>
            <person name="Chou H.L."/>
            <person name="Zhang L."/>
            <person name="Okita T.W."/>
        </authorList>
    </citation>
    <scope>FUNCTION</scope>
    <scope>SUBCELLULAR LOCATION</scope>
</reference>
<reference key="9">
    <citation type="journal article" date="2020" name="Plant Cell">
        <title>Zipcode RNA-binding proteins and membrane trafficking proteins cooperate to transport glutelin mRNAs in rice endosperm.</title>
        <authorList>
            <person name="Tian L."/>
            <person name="Doroshenk K.A."/>
            <person name="Zhang L."/>
            <person name="Fukuda M."/>
            <person name="Washida H."/>
            <person name="Kumamaru T."/>
            <person name="Okita T."/>
        </authorList>
    </citation>
    <scope>FUNCTION</scope>
    <scope>INTERACTION WITH RAB5A</scope>
</reference>
<gene>
    <name evidence="7" type="primary">RBP-L</name>
    <name evidence="9" type="ordered locus">Os04g0625800</name>
    <name evidence="8" type="ordered locus">LOC_Os04g53440</name>
    <name evidence="10" type="ORF">OSJNBb0060E08.6</name>
</gene>
<feature type="chain" id="PRO_0000451590" description="RNA-binding protein L">
    <location>
        <begin position="1"/>
        <end position="425"/>
    </location>
</feature>
<feature type="domain" description="RRM 1" evidence="1">
    <location>
        <begin position="90"/>
        <end position="170"/>
    </location>
</feature>
<feature type="domain" description="RRM 2" evidence="1">
    <location>
        <begin position="180"/>
        <end position="259"/>
    </location>
</feature>
<feature type="domain" description="RRM 3" evidence="1">
    <location>
        <begin position="284"/>
        <end position="356"/>
    </location>
</feature>
<feature type="region of interest" description="Disordered" evidence="2">
    <location>
        <begin position="1"/>
        <end position="82"/>
    </location>
</feature>
<feature type="compositionally biased region" description="Pro residues" evidence="2">
    <location>
        <begin position="1"/>
        <end position="20"/>
    </location>
</feature>
<feature type="compositionally biased region" description="Low complexity" evidence="2">
    <location>
        <begin position="21"/>
        <end position="31"/>
    </location>
</feature>
<feature type="compositionally biased region" description="Pro residues" evidence="2">
    <location>
        <begin position="32"/>
        <end position="80"/>
    </location>
</feature>
<comment type="function">
    <text evidence="3 5 6">RNA-binding protein that binds to a cis-localization element or zipcode, within the 5'-CDS of prolamine RNA (PubMed:20217123). Binds strongly to glutelin and prolamin mRNAs, particularly to 3'-UTR and zipcode RNA (PubMed:30659066). Recognizes and binds to glutelin zipcode RNA, which is required for proper mRNA localization to cisternal endoplasmic reticulum (PubMed:30659066). Recognizes and binds to prolamin zipcode RNA, which is required for proper mRNA localization to the protein body endoplasmic reticulum that delimits the prolamine intracisternal inclusion granules (PubMed:30659066). Required for the correct localization of glutelin and prolamine mRNA in endosperm cells during grain development (PubMed:30659066). RBP-L and RBP-P form a quaternary complex with the membrane trafficking factors NSF and RAB5A (PubMed:32471860). This quaternay complex carries glutelin mRNAs for active transport on endosomes to the cortical endoplasmic reticulum membrane, and enables endosome-mediated glutelin mRNA transport in endosperm cells (PubMed:32471860).</text>
</comment>
<comment type="subunit">
    <text evidence="4 6">Interacts with RBP-P (PubMed:30190374). Interacts with RAB5A (PubMed:32471860).</text>
</comment>
<comment type="subcellular location">
    <subcellularLocation>
        <location evidence="5">Nucleus</location>
    </subcellularLocation>
    <subcellularLocation>
        <location evidence="5">Cytoplasm</location>
    </subcellularLocation>
</comment>
<comment type="similarity">
    <text evidence="8">Belongs to the polyadenylate-binding RBP45 family.</text>
</comment>
<comment type="sequence caution" evidence="8">
    <conflict type="erroneous initiation">
        <sequence resource="EMBL-CDS" id="CAE04743"/>
    </conflict>
    <text>Truncated N-terminus.</text>
</comment>
<evidence type="ECO:0000255" key="1">
    <source>
        <dbReference type="PROSITE-ProRule" id="PRU00176"/>
    </source>
</evidence>
<evidence type="ECO:0000256" key="2">
    <source>
        <dbReference type="SAM" id="MobiDB-lite"/>
    </source>
</evidence>
<evidence type="ECO:0000269" key="3">
    <source>
    </source>
</evidence>
<evidence type="ECO:0000269" key="4">
    <source>
    </source>
</evidence>
<evidence type="ECO:0000269" key="5">
    <source>
    </source>
</evidence>
<evidence type="ECO:0000269" key="6">
    <source>
    </source>
</evidence>
<evidence type="ECO:0000303" key="7">
    <source>
    </source>
</evidence>
<evidence type="ECO:0000305" key="8"/>
<evidence type="ECO:0000312" key="9">
    <source>
        <dbReference type="EMBL" id="BAS91113.1"/>
    </source>
</evidence>
<evidence type="ECO:0000312" key="10">
    <source>
        <dbReference type="EMBL" id="CAE04743.3"/>
    </source>
</evidence>